<accession>B1WR29</accession>
<comment type="function">
    <text evidence="1">Involved in the binding and/or turnover of quinones at the Q(B) site of photosystem II (PSII). PSII is a light-driven water plastoquinone oxidoreductase, using light energy to abstract electrons from H(2)O, generating a proton gradient subsequently used for ATP formation.</text>
</comment>
<comment type="subunit">
    <text evidence="1">PSII is composed of 1 copy each of membrane proteins PsbA, PsbB, PsbC, PsbD, PsbE, PsbF, PsbH, PsbI, PsbJ, PsbK, PsbL, PsbM, PsbT, PsbX, PsbY, PsbZ, Psb30/Ycf12, peripheral proteins PsbO, CyanoQ (PsbQ), PsbU, PsbV and a large number of cofactors. It forms dimeric complexes.</text>
</comment>
<comment type="subcellular location">
    <subcellularLocation>
        <location evidence="1">Cellular thylakoid membrane</location>
        <topology evidence="1">Single-pass membrane protein</topology>
    </subcellularLocation>
</comment>
<comment type="similarity">
    <text evidence="1">Belongs to the PsbX family. Type 1 subfamily.</text>
</comment>
<organism>
    <name type="scientific">Crocosphaera subtropica (strain ATCC 51142 / BH68)</name>
    <name type="common">Cyanothece sp. (strain ATCC 51142)</name>
    <dbReference type="NCBI Taxonomy" id="43989"/>
    <lineage>
        <taxon>Bacteria</taxon>
        <taxon>Bacillati</taxon>
        <taxon>Cyanobacteriota</taxon>
        <taxon>Cyanophyceae</taxon>
        <taxon>Oscillatoriophycideae</taxon>
        <taxon>Chroococcales</taxon>
        <taxon>Aphanothecaceae</taxon>
        <taxon>Crocosphaera</taxon>
        <taxon>Crocosphaera subtropica</taxon>
    </lineage>
</organism>
<protein>
    <recommendedName>
        <fullName evidence="1">Photosystem II reaction center protein X</fullName>
    </recommendedName>
</protein>
<feature type="chain" id="PRO_1000184260" description="Photosystem II reaction center protein X">
    <location>
        <begin position="1"/>
        <end position="40"/>
    </location>
</feature>
<feature type="transmembrane region" description="Helical" evidence="1">
    <location>
        <begin position="10"/>
        <end position="30"/>
    </location>
</feature>
<evidence type="ECO:0000255" key="1">
    <source>
        <dbReference type="HAMAP-Rule" id="MF_01386"/>
    </source>
</evidence>
<name>PSBX_CROS5</name>
<gene>
    <name evidence="1" type="primary">psbX</name>
    <name type="ordered locus">cce_0736</name>
</gene>
<dbReference type="EMBL" id="CP000806">
    <property type="protein sequence ID" value="ACB50087.1"/>
    <property type="molecule type" value="Genomic_DNA"/>
</dbReference>
<dbReference type="RefSeq" id="WP_012361448.1">
    <property type="nucleotide sequence ID" value="NC_010546.1"/>
</dbReference>
<dbReference type="SMR" id="B1WR29"/>
<dbReference type="STRING" id="43989.cce_0736"/>
<dbReference type="KEGG" id="cyt:cce_0736"/>
<dbReference type="eggNOG" id="ENOG5033AJK">
    <property type="taxonomic scope" value="Bacteria"/>
</dbReference>
<dbReference type="HOGENOM" id="CLU_212837_1_0_3"/>
<dbReference type="Proteomes" id="UP000001203">
    <property type="component" value="Chromosome circular"/>
</dbReference>
<dbReference type="GO" id="GO:0009523">
    <property type="term" value="C:photosystem II"/>
    <property type="evidence" value="ECO:0007669"/>
    <property type="project" value="UniProtKB-KW"/>
</dbReference>
<dbReference type="GO" id="GO:0031676">
    <property type="term" value="C:plasma membrane-derived thylakoid membrane"/>
    <property type="evidence" value="ECO:0007669"/>
    <property type="project" value="UniProtKB-SubCell"/>
</dbReference>
<dbReference type="GO" id="GO:0015979">
    <property type="term" value="P:photosynthesis"/>
    <property type="evidence" value="ECO:0007669"/>
    <property type="project" value="UniProtKB-UniRule"/>
</dbReference>
<dbReference type="Gene3D" id="1.20.5.510">
    <property type="entry name" value="Single helix bin"/>
    <property type="match status" value="1"/>
</dbReference>
<dbReference type="HAMAP" id="MF_01386">
    <property type="entry name" value="PSII_PsbX_1"/>
    <property type="match status" value="1"/>
</dbReference>
<dbReference type="InterPro" id="IPR009518">
    <property type="entry name" value="PSII_PsbX"/>
</dbReference>
<dbReference type="InterPro" id="IPR023431">
    <property type="entry name" value="PSII_PsbX_type_1_subfam"/>
</dbReference>
<dbReference type="Pfam" id="PF06596">
    <property type="entry name" value="PsbX"/>
    <property type="match status" value="1"/>
</dbReference>
<sequence length="40" mass="4477">MTPSLANFLWSLVWGTVIVVIPVTVGLVFISQSDKIKRNF</sequence>
<keyword id="KW-0472">Membrane</keyword>
<keyword id="KW-0602">Photosynthesis</keyword>
<keyword id="KW-0604">Photosystem II</keyword>
<keyword id="KW-1185">Reference proteome</keyword>
<keyword id="KW-0793">Thylakoid</keyword>
<keyword id="KW-0812">Transmembrane</keyword>
<keyword id="KW-1133">Transmembrane helix</keyword>
<reference key="1">
    <citation type="journal article" date="2008" name="Proc. Natl. Acad. Sci. U.S.A.">
        <title>The genome of Cyanothece 51142, a unicellular diazotrophic cyanobacterium important in the marine nitrogen cycle.</title>
        <authorList>
            <person name="Welsh E.A."/>
            <person name="Liberton M."/>
            <person name="Stoeckel J."/>
            <person name="Loh T."/>
            <person name="Elvitigala T."/>
            <person name="Wang C."/>
            <person name="Wollam A."/>
            <person name="Fulton R.S."/>
            <person name="Clifton S.W."/>
            <person name="Jacobs J.M."/>
            <person name="Aurora R."/>
            <person name="Ghosh B.K."/>
            <person name="Sherman L.A."/>
            <person name="Smith R.D."/>
            <person name="Wilson R.K."/>
            <person name="Pakrasi H.B."/>
        </authorList>
    </citation>
    <scope>NUCLEOTIDE SEQUENCE [LARGE SCALE GENOMIC DNA]</scope>
    <source>
        <strain>ATCC 51142 / BH68</strain>
    </source>
</reference>
<proteinExistence type="inferred from homology"/>